<gene>
    <name evidence="1" type="primary">rbfA</name>
    <name type="ordered locus">ACICU_00351</name>
</gene>
<name>RBFA_ACIBC</name>
<reference key="1">
    <citation type="journal article" date="2008" name="Antimicrob. Agents Chemother.">
        <title>Whole-genome pyrosequencing of an epidemic multidrug-resistant Acinetobacter baumannii strain belonging to the European clone II group.</title>
        <authorList>
            <person name="Iacono M."/>
            <person name="Villa L."/>
            <person name="Fortini D."/>
            <person name="Bordoni R."/>
            <person name="Imperi F."/>
            <person name="Bonnal R.J."/>
            <person name="Sicheritz-Ponten T."/>
            <person name="De Bellis G."/>
            <person name="Visca P."/>
            <person name="Cassone A."/>
            <person name="Carattoli A."/>
        </authorList>
    </citation>
    <scope>NUCLEOTIDE SEQUENCE [LARGE SCALE GENOMIC DNA]</scope>
    <source>
        <strain>ACICU</strain>
    </source>
</reference>
<protein>
    <recommendedName>
        <fullName evidence="1">Ribosome-binding factor A</fullName>
    </recommendedName>
</protein>
<accession>B2I2M8</accession>
<keyword id="KW-0963">Cytoplasm</keyword>
<keyword id="KW-0690">Ribosome biogenesis</keyword>
<comment type="function">
    <text evidence="1">One of several proteins that assist in the late maturation steps of the functional core of the 30S ribosomal subunit. Associates with free 30S ribosomal subunits (but not with 30S subunits that are part of 70S ribosomes or polysomes). Required for efficient processing of 16S rRNA. May interact with the 5'-terminal helix region of 16S rRNA.</text>
</comment>
<comment type="subunit">
    <text evidence="1">Monomer. Binds 30S ribosomal subunits, but not 50S ribosomal subunits or 70S ribosomes.</text>
</comment>
<comment type="subcellular location">
    <subcellularLocation>
        <location evidence="1">Cytoplasm</location>
    </subcellularLocation>
</comment>
<comment type="similarity">
    <text evidence="1">Belongs to the RbfA family.</text>
</comment>
<sequence length="133" mass="15225">MAGGQRLKRMADSVQRELSELIRQELKDPRLGGLVTISGVKVSPDLGYADVYVTVMGRELSDDQNEVAHRETLDILNKASGFLRQELSRRIKTRITPRLRFHYDKTNAYGNYMFGLIEKAVQDLPKRESDDKE</sequence>
<feature type="chain" id="PRO_1000088848" description="Ribosome-binding factor A">
    <location>
        <begin position="1"/>
        <end position="133"/>
    </location>
</feature>
<proteinExistence type="inferred from homology"/>
<organism>
    <name type="scientific">Acinetobacter baumannii (strain ACICU)</name>
    <dbReference type="NCBI Taxonomy" id="405416"/>
    <lineage>
        <taxon>Bacteria</taxon>
        <taxon>Pseudomonadati</taxon>
        <taxon>Pseudomonadota</taxon>
        <taxon>Gammaproteobacteria</taxon>
        <taxon>Moraxellales</taxon>
        <taxon>Moraxellaceae</taxon>
        <taxon>Acinetobacter</taxon>
        <taxon>Acinetobacter calcoaceticus/baumannii complex</taxon>
    </lineage>
</organism>
<dbReference type="EMBL" id="CP000863">
    <property type="protein sequence ID" value="ACC55663.1"/>
    <property type="molecule type" value="Genomic_DNA"/>
</dbReference>
<dbReference type="RefSeq" id="WP_000897047.1">
    <property type="nucleotide sequence ID" value="NZ_CP031380.1"/>
</dbReference>
<dbReference type="SMR" id="B2I2M8"/>
<dbReference type="KEGG" id="abc:ACICU_00351"/>
<dbReference type="HOGENOM" id="CLU_089475_5_0_6"/>
<dbReference type="Proteomes" id="UP000008839">
    <property type="component" value="Chromosome"/>
</dbReference>
<dbReference type="GO" id="GO:0005829">
    <property type="term" value="C:cytosol"/>
    <property type="evidence" value="ECO:0007669"/>
    <property type="project" value="TreeGrafter"/>
</dbReference>
<dbReference type="GO" id="GO:0043024">
    <property type="term" value="F:ribosomal small subunit binding"/>
    <property type="evidence" value="ECO:0007669"/>
    <property type="project" value="TreeGrafter"/>
</dbReference>
<dbReference type="GO" id="GO:0030490">
    <property type="term" value="P:maturation of SSU-rRNA"/>
    <property type="evidence" value="ECO:0007669"/>
    <property type="project" value="UniProtKB-UniRule"/>
</dbReference>
<dbReference type="Gene3D" id="3.30.300.20">
    <property type="match status" value="1"/>
</dbReference>
<dbReference type="HAMAP" id="MF_00003">
    <property type="entry name" value="RbfA"/>
    <property type="match status" value="1"/>
</dbReference>
<dbReference type="InterPro" id="IPR015946">
    <property type="entry name" value="KH_dom-like_a/b"/>
</dbReference>
<dbReference type="InterPro" id="IPR000238">
    <property type="entry name" value="RbfA"/>
</dbReference>
<dbReference type="InterPro" id="IPR023799">
    <property type="entry name" value="RbfA_dom_sf"/>
</dbReference>
<dbReference type="NCBIfam" id="NF010389">
    <property type="entry name" value="PRK13816.1"/>
    <property type="match status" value="1"/>
</dbReference>
<dbReference type="NCBIfam" id="TIGR00082">
    <property type="entry name" value="rbfA"/>
    <property type="match status" value="1"/>
</dbReference>
<dbReference type="PANTHER" id="PTHR33515">
    <property type="entry name" value="RIBOSOME-BINDING FACTOR A, CHLOROPLASTIC-RELATED"/>
    <property type="match status" value="1"/>
</dbReference>
<dbReference type="PANTHER" id="PTHR33515:SF1">
    <property type="entry name" value="RIBOSOME-BINDING FACTOR A, CHLOROPLASTIC-RELATED"/>
    <property type="match status" value="1"/>
</dbReference>
<dbReference type="Pfam" id="PF02033">
    <property type="entry name" value="RBFA"/>
    <property type="match status" value="1"/>
</dbReference>
<dbReference type="SUPFAM" id="SSF89919">
    <property type="entry name" value="Ribosome-binding factor A, RbfA"/>
    <property type="match status" value="1"/>
</dbReference>
<evidence type="ECO:0000255" key="1">
    <source>
        <dbReference type="HAMAP-Rule" id="MF_00003"/>
    </source>
</evidence>